<feature type="chain" id="PRO_5015093756" description="Threonine/serine exporter">
    <location>
        <begin position="1"/>
        <end position="489"/>
    </location>
</feature>
<feature type="transmembrane region" description="Helical" evidence="1">
    <location>
        <begin position="151"/>
        <end position="171"/>
    </location>
</feature>
<feature type="transmembrane region" description="Helical" evidence="1">
    <location>
        <begin position="174"/>
        <end position="194"/>
    </location>
</feature>
<feature type="transmembrane region" description="Helical" evidence="1">
    <location>
        <begin position="206"/>
        <end position="226"/>
    </location>
</feature>
<feature type="transmembrane region" description="Helical" evidence="1">
    <location>
        <begin position="233"/>
        <end position="253"/>
    </location>
</feature>
<feature type="transmembrane region" description="Helical" evidence="1">
    <location>
        <begin position="268"/>
        <end position="288"/>
    </location>
</feature>
<feature type="transmembrane region" description="Helical" evidence="1">
    <location>
        <begin position="314"/>
        <end position="334"/>
    </location>
</feature>
<feature type="transmembrane region" description="Helical" evidence="1">
    <location>
        <begin position="335"/>
        <end position="355"/>
    </location>
</feature>
<feature type="transmembrane region" description="Helical" evidence="1">
    <location>
        <begin position="356"/>
        <end position="376"/>
    </location>
</feature>
<feature type="transmembrane region" description="Helical" evidence="1">
    <location>
        <begin position="381"/>
        <end position="401"/>
    </location>
</feature>
<feature type="transmembrane region" description="Helical" evidence="1">
    <location>
        <begin position="420"/>
        <end position="440"/>
    </location>
</feature>
<feature type="region of interest" description="Disordered" evidence="2">
    <location>
        <begin position="464"/>
        <end position="489"/>
    </location>
</feature>
<feature type="compositionally biased region" description="Basic residues" evidence="2">
    <location>
        <begin position="473"/>
        <end position="489"/>
    </location>
</feature>
<protein>
    <recommendedName>
        <fullName evidence="5">Threonine/serine exporter</fullName>
    </recommendedName>
</protein>
<keyword id="KW-0029">Amino-acid transport</keyword>
<keyword id="KW-1003">Cell membrane</keyword>
<keyword id="KW-0472">Membrane</keyword>
<keyword id="KW-0812">Transmembrane</keyword>
<keyword id="KW-1133">Transmembrane helix</keyword>
<keyword id="KW-0813">Transport</keyword>
<gene>
    <name evidence="4" type="primary">thrE</name>
    <name evidence="9" type="ORF">APT58_12930</name>
    <name evidence="11" type="ORF">AUO95_02805</name>
    <name evidence="10" type="ORF">CS176_2351</name>
</gene>
<sequence length="489" mass="51698">MLSFATLRGRISTVDAAKAAPPPSPLAPIDLTDHSQVAGVMNLAARIGDILLSSGTSNSDTKVQVRAVTSAYGLYYTHVDITLNTITIFTNIGVERKMPVNVFHVVGKLDTNFSKLSEVDRLIRSIQAGATPPEVAEKILDELEQSPASYGFPVALLGWAMMGGAVAVLLGGGWQVSLIAFITAFTIIATTSFLGKKGLPTFFQNVVGGFIATLPASIAYSLALQFGLEIKPSQIIASGIVVLLAGLTLVQSLQDGITGAPVTASARFFETLLFTGGIVAGVGLGIQLSEILHVMLPAMESAAAPNYSSTFARIIAGGVTAAAFAVGCYAEWSSVIIAGLTALMGSAFYYLFVVYLGPVSAAAIAATAVGFTGGLLARRFLIPPLIVAIAGITPMLPGLAIYRGMYATLNDQTLMGFTNIAVALATASSLAAGVVLGEWIARRLRRPPRFNPYRAFTKANEFSFQEEAEQNQRRQRKRPKTNQRFGNKR</sequence>
<reference key="1">
    <citation type="journal article" date="2001" name="J. Bacteriol.">
        <title>L-threonine export: use of peptides to identify a new translocator from Corynebacterium glutamicum.</title>
        <authorList>
            <person name="Simic P."/>
            <person name="Sahm H."/>
            <person name="Eggeling L."/>
        </authorList>
    </citation>
    <scope>NUCLEOTIDE SEQUENCE [GENOMIC DNA]</scope>
    <scope>FUNCTION AS A TRANSPORTER</scope>
    <scope>ACTIVITY REGULATION</scope>
    <scope>DISRUPTION PHENOTYPE</scope>
    <source>
        <strain>ATCC 14752</strain>
    </source>
</reference>
<reference key="2">
    <citation type="submission" date="2014-05" db="EMBL/GenBank/DDBJ databases">
        <title>Corynebacterium glutamicum CS176 whole genome sequencing project.</title>
        <authorList>
            <person name="Matsutani M."/>
            <person name="Trakulnaleamsai S."/>
            <person name="Yakushi T."/>
            <person name="Matsushita K."/>
        </authorList>
    </citation>
    <scope>NUCLEOTIDE SEQUENCE [LARGE SCALE GENOMIC DNA]</scope>
    <source>
        <strain>CS176</strain>
    </source>
</reference>
<reference key="3">
    <citation type="submission" date="2015-12" db="EMBL/GenBank/DDBJ databases">
        <title>Genome sequence of Corynebacterium glutamicum ATCC13870.</title>
        <authorList>
            <person name="Yang J."/>
            <person name="Yang S."/>
        </authorList>
    </citation>
    <scope>NUCLEOTIDE SEQUENCE [LARGE SCALE GENOMIC DNA]</scope>
    <source>
        <strain>ATCC 13870</strain>
    </source>
</reference>
<reference key="4">
    <citation type="submission" date="2016-01" db="EMBL/GenBank/DDBJ databases">
        <title>Annotation of Corynebacterium glutamicum USDA-ARS-USMARC-56828.</title>
        <authorList>
            <person name="Harhay G.P."/>
            <person name="Harhay D.M."/>
            <person name="Smith T.P.L."/>
            <person name="Bono J.L."/>
            <person name="Heaton M.P."/>
            <person name="Clawson M.L."/>
            <person name="Chitko-Mckown C.G."/>
            <person name="Capik S.F."/>
            <person name="DeDonder K.D."/>
            <person name="Apley M.D."/>
            <person name="Lubbers B.V."/>
            <person name="White B.J."/>
            <person name="Larson R.L."/>
        </authorList>
    </citation>
    <scope>NUCLEOTIDE SEQUENCE [LARGE SCALE GENOMIC DNA]</scope>
    <source>
        <strain>USDA-ARS-USMARC-56828</strain>
    </source>
</reference>
<reference key="5">
    <citation type="journal article" date="2002" name="Res. Microbiol.">
        <title>The ubiquitous ThrE family of putative transmembrane amino acid efflux transporters.</title>
        <authorList>
            <person name="Yen M.R."/>
            <person name="Tseng Y.H."/>
            <person name="Simic P."/>
            <person name="Sahm H."/>
            <person name="Eggeling L."/>
            <person name="Saier M.H. Jr."/>
        </authorList>
    </citation>
    <scope>THRE FAMILY</scope>
    <scope>PHYLOGENETIC ANALYSES</scope>
</reference>
<organism>
    <name type="scientific">Corynebacterium glutamicum</name>
    <name type="common">Brevibacterium saccharolyticum</name>
    <dbReference type="NCBI Taxonomy" id="1718"/>
    <lineage>
        <taxon>Bacteria</taxon>
        <taxon>Bacillati</taxon>
        <taxon>Actinomycetota</taxon>
        <taxon>Actinomycetes</taxon>
        <taxon>Mycobacteriales</taxon>
        <taxon>Corynebacteriaceae</taxon>
        <taxon>Corynebacterium</taxon>
    </lineage>
</organism>
<comment type="function">
    <text evidence="3">Catalyzes the export of L-threonine and L-serine from the cell to the extracellular environment (PubMed:11514515). Export is dependent on the proton motive force (PubMed:11514515).</text>
</comment>
<comment type="catalytic activity">
    <reaction evidence="7">
        <text>L-threonine(in) + H(+)(out) = L-threonine(out) + H(+)(in)</text>
        <dbReference type="Rhea" id="RHEA:28995"/>
        <dbReference type="ChEBI" id="CHEBI:15378"/>
        <dbReference type="ChEBI" id="CHEBI:57926"/>
    </reaction>
    <physiologicalReaction direction="left-to-right" evidence="7">
        <dbReference type="Rhea" id="RHEA:28996"/>
    </physiologicalReaction>
</comment>
<comment type="activity regulation">
    <text evidence="3">Transport is inhibited by the proton ionophore carbonyl cyanide m-chlorophenylhydrazone (CCCP).</text>
</comment>
<comment type="subcellular location">
    <subcellularLocation>
        <location evidence="6">Cell membrane</location>
        <topology evidence="1">Multi-pass membrane protein</topology>
    </subcellularLocation>
</comment>
<comment type="disruption phenotype">
    <text evidence="3">Mutant shows increased threonine peptide sensitivity (PubMed:11514515). Mutant still exports L-threonine, but at a reduced rate (PubMed:11514515).</text>
</comment>
<comment type="similarity">
    <text evidence="8">Belongs to the ThrE exporter (TC 2.A.79) family.</text>
</comment>
<proteinExistence type="evidence at protein level"/>
<name>THRE_CORGT</name>
<accession>H7C6B6</accession>
<dbReference type="EMBL" id="AF326510">
    <property type="protein sequence ID" value="AAK61331.1"/>
    <property type="molecule type" value="Genomic_DNA"/>
</dbReference>
<dbReference type="EMBL" id="CP013991">
    <property type="protein sequence ID" value="AMA01055.1"/>
    <property type="molecule type" value="Genomic_DNA"/>
</dbReference>
<dbReference type="EMBL" id="BAYH01000035">
    <property type="protein sequence ID" value="GAV98121.1"/>
    <property type="molecule type" value="Genomic_DNA"/>
</dbReference>
<dbReference type="EMBL" id="LOQV01000009">
    <property type="protein sequence ID" value="OKX84828.1"/>
    <property type="molecule type" value="Genomic_DNA"/>
</dbReference>
<dbReference type="RefSeq" id="WP_003853939.1">
    <property type="nucleotide sequence ID" value="NZ_LOQW01000007.1"/>
</dbReference>
<dbReference type="SMR" id="H7C6B6"/>
<dbReference type="GeneID" id="1020569"/>
<dbReference type="PATRIC" id="fig|1718.43.peg.2596"/>
<dbReference type="OMA" id="LEVMYFF"/>
<dbReference type="GO" id="GO:0005886">
    <property type="term" value="C:plasma membrane"/>
    <property type="evidence" value="ECO:0007669"/>
    <property type="project" value="UniProtKB-SubCell"/>
</dbReference>
<dbReference type="GO" id="GO:0022857">
    <property type="term" value="F:transmembrane transporter activity"/>
    <property type="evidence" value="ECO:0007669"/>
    <property type="project" value="InterPro"/>
</dbReference>
<dbReference type="GO" id="GO:0006865">
    <property type="term" value="P:amino acid transport"/>
    <property type="evidence" value="ECO:0007669"/>
    <property type="project" value="UniProtKB-KW"/>
</dbReference>
<dbReference type="GO" id="GO:0015744">
    <property type="term" value="P:succinate transport"/>
    <property type="evidence" value="ECO:0007669"/>
    <property type="project" value="TreeGrafter"/>
</dbReference>
<dbReference type="InterPro" id="IPR010619">
    <property type="entry name" value="ThrE-like_N"/>
</dbReference>
<dbReference type="InterPro" id="IPR024528">
    <property type="entry name" value="ThrE_2"/>
</dbReference>
<dbReference type="InterPro" id="IPR050539">
    <property type="entry name" value="ThrE_Dicarb/AminoAcid_Exp"/>
</dbReference>
<dbReference type="NCBIfam" id="NF047720">
    <property type="entry name" value="ThrSerExpThrE"/>
    <property type="match status" value="1"/>
</dbReference>
<dbReference type="PANTHER" id="PTHR34390:SF2">
    <property type="entry name" value="SUCCINATE TRANSPORTER SUBUNIT YJJP-RELATED"/>
    <property type="match status" value="1"/>
</dbReference>
<dbReference type="PANTHER" id="PTHR34390">
    <property type="entry name" value="UPF0442 PROTEIN YJJB-RELATED"/>
    <property type="match status" value="1"/>
</dbReference>
<dbReference type="Pfam" id="PF06738">
    <property type="entry name" value="ThrE"/>
    <property type="match status" value="1"/>
</dbReference>
<dbReference type="Pfam" id="PF12821">
    <property type="entry name" value="ThrE_2"/>
    <property type="match status" value="1"/>
</dbReference>
<evidence type="ECO:0000255" key="1"/>
<evidence type="ECO:0000256" key="2">
    <source>
        <dbReference type="SAM" id="MobiDB-lite"/>
    </source>
</evidence>
<evidence type="ECO:0000269" key="3">
    <source>
    </source>
</evidence>
<evidence type="ECO:0000303" key="4">
    <source>
    </source>
</evidence>
<evidence type="ECO:0000303" key="5">
    <source>
    </source>
</evidence>
<evidence type="ECO:0000305" key="6"/>
<evidence type="ECO:0000305" key="7">
    <source>
    </source>
</evidence>
<evidence type="ECO:0000305" key="8">
    <source>
    </source>
</evidence>
<evidence type="ECO:0000312" key="9">
    <source>
        <dbReference type="EMBL" id="AMA01055.1"/>
    </source>
</evidence>
<evidence type="ECO:0000312" key="10">
    <source>
        <dbReference type="EMBL" id="GAV98121.1"/>
    </source>
</evidence>
<evidence type="ECO:0000312" key="11">
    <source>
        <dbReference type="EMBL" id="OKX84828.1"/>
    </source>
</evidence>